<dbReference type="EC" id="2.3.1.274" evidence="1"/>
<dbReference type="EMBL" id="CR555306">
    <property type="protein sequence ID" value="CAI09227.1"/>
    <property type="molecule type" value="Genomic_DNA"/>
</dbReference>
<dbReference type="RefSeq" id="WP_011238904.1">
    <property type="nucleotide sequence ID" value="NC_006513.1"/>
</dbReference>
<dbReference type="SMR" id="Q5P0D7"/>
<dbReference type="STRING" id="76114.ebA5454"/>
<dbReference type="KEGG" id="eba:ebA5454"/>
<dbReference type="eggNOG" id="COG0416">
    <property type="taxonomic scope" value="Bacteria"/>
</dbReference>
<dbReference type="HOGENOM" id="CLU_039379_1_0_4"/>
<dbReference type="OrthoDB" id="9806408at2"/>
<dbReference type="UniPathway" id="UPA00085"/>
<dbReference type="Proteomes" id="UP000006552">
    <property type="component" value="Chromosome"/>
</dbReference>
<dbReference type="GO" id="GO:0005737">
    <property type="term" value="C:cytoplasm"/>
    <property type="evidence" value="ECO:0007669"/>
    <property type="project" value="UniProtKB-SubCell"/>
</dbReference>
<dbReference type="GO" id="GO:0043811">
    <property type="term" value="F:phosphate:acyl-[acyl carrier protein] acyltransferase activity"/>
    <property type="evidence" value="ECO:0007669"/>
    <property type="project" value="UniProtKB-UniRule"/>
</dbReference>
<dbReference type="GO" id="GO:0006633">
    <property type="term" value="P:fatty acid biosynthetic process"/>
    <property type="evidence" value="ECO:0007669"/>
    <property type="project" value="UniProtKB-UniRule"/>
</dbReference>
<dbReference type="GO" id="GO:0008654">
    <property type="term" value="P:phospholipid biosynthetic process"/>
    <property type="evidence" value="ECO:0007669"/>
    <property type="project" value="UniProtKB-KW"/>
</dbReference>
<dbReference type="Gene3D" id="3.40.718.10">
    <property type="entry name" value="Isopropylmalate Dehydrogenase"/>
    <property type="match status" value="1"/>
</dbReference>
<dbReference type="HAMAP" id="MF_00019">
    <property type="entry name" value="PlsX"/>
    <property type="match status" value="1"/>
</dbReference>
<dbReference type="InterPro" id="IPR003664">
    <property type="entry name" value="FA_synthesis"/>
</dbReference>
<dbReference type="InterPro" id="IPR012281">
    <property type="entry name" value="Phospholipid_synth_PlsX-like"/>
</dbReference>
<dbReference type="NCBIfam" id="TIGR00182">
    <property type="entry name" value="plsX"/>
    <property type="match status" value="1"/>
</dbReference>
<dbReference type="PANTHER" id="PTHR30100">
    <property type="entry name" value="FATTY ACID/PHOSPHOLIPID SYNTHESIS PROTEIN PLSX"/>
    <property type="match status" value="1"/>
</dbReference>
<dbReference type="PANTHER" id="PTHR30100:SF1">
    <property type="entry name" value="PHOSPHATE ACYLTRANSFERASE"/>
    <property type="match status" value="1"/>
</dbReference>
<dbReference type="Pfam" id="PF02504">
    <property type="entry name" value="FA_synthesis"/>
    <property type="match status" value="1"/>
</dbReference>
<dbReference type="PIRSF" id="PIRSF002465">
    <property type="entry name" value="Phsphlp_syn_PlsX"/>
    <property type="match status" value="1"/>
</dbReference>
<dbReference type="SUPFAM" id="SSF53659">
    <property type="entry name" value="Isocitrate/Isopropylmalate dehydrogenase-like"/>
    <property type="match status" value="1"/>
</dbReference>
<protein>
    <recommendedName>
        <fullName evidence="1">Phosphate acyltransferase</fullName>
        <ecNumber evidence="1">2.3.1.274</ecNumber>
    </recommendedName>
    <alternativeName>
        <fullName evidence="1">Acyl-ACP phosphotransacylase</fullName>
    </alternativeName>
    <alternativeName>
        <fullName evidence="1">Acyl-[acyl-carrier-protein]--phosphate acyltransferase</fullName>
    </alternativeName>
    <alternativeName>
        <fullName evidence="1">Phosphate-acyl-ACP acyltransferase</fullName>
    </alternativeName>
</protein>
<keyword id="KW-0963">Cytoplasm</keyword>
<keyword id="KW-0444">Lipid biosynthesis</keyword>
<keyword id="KW-0443">Lipid metabolism</keyword>
<keyword id="KW-0594">Phospholipid biosynthesis</keyword>
<keyword id="KW-1208">Phospholipid metabolism</keyword>
<keyword id="KW-1185">Reference proteome</keyword>
<keyword id="KW-0808">Transferase</keyword>
<evidence type="ECO:0000255" key="1">
    <source>
        <dbReference type="HAMAP-Rule" id="MF_00019"/>
    </source>
</evidence>
<accession>Q5P0D7</accession>
<sequence>MGVTVAIDCMGGDHGPAVTVPAARAFLRNHPEARIVLVGRQDALEQAMGAIGNGFGERLSLRAASEVIAMDDPPAIAMRSKKDSSMRVAIDLVKSGEAQAAVSAGNTGALMAISRFVLKTLPGIDRPAIATILPTRKGQTYVLDLGANVDCLPEHLLQFGIMGAMLVSAVEHLDRPTVGLLNIGEEAIKGNEVVKRAAELLKTSGLNFYGNVEGDDIYKGTTDVVVCDGFVGNVALKTSEGLAQMLATFLREEFSRNLLSKAMALIAMPALKRFKHRVDHRRYNGAALLGLRGVVVKSHGSADAFAFEQAIHRAAEAASNRLIERITERMTAMGVAA</sequence>
<comment type="function">
    <text evidence="1">Catalyzes the reversible formation of acyl-phosphate (acyl-PO(4)) from acyl-[acyl-carrier-protein] (acyl-ACP). This enzyme utilizes acyl-ACP as fatty acyl donor, but not acyl-CoA.</text>
</comment>
<comment type="catalytic activity">
    <reaction evidence="1">
        <text>a fatty acyl-[ACP] + phosphate = an acyl phosphate + holo-[ACP]</text>
        <dbReference type="Rhea" id="RHEA:42292"/>
        <dbReference type="Rhea" id="RHEA-COMP:9685"/>
        <dbReference type="Rhea" id="RHEA-COMP:14125"/>
        <dbReference type="ChEBI" id="CHEBI:43474"/>
        <dbReference type="ChEBI" id="CHEBI:59918"/>
        <dbReference type="ChEBI" id="CHEBI:64479"/>
        <dbReference type="ChEBI" id="CHEBI:138651"/>
        <dbReference type="EC" id="2.3.1.274"/>
    </reaction>
</comment>
<comment type="pathway">
    <text evidence="1">Lipid metabolism; phospholipid metabolism.</text>
</comment>
<comment type="subunit">
    <text evidence="1">Homodimer. Probably interacts with PlsY.</text>
</comment>
<comment type="subcellular location">
    <subcellularLocation>
        <location evidence="1">Cytoplasm</location>
    </subcellularLocation>
    <text evidence="1">Associated with the membrane possibly through PlsY.</text>
</comment>
<comment type="similarity">
    <text evidence="1">Belongs to the PlsX family.</text>
</comment>
<organism>
    <name type="scientific">Aromatoleum aromaticum (strain DSM 19018 / LMG 30748 / EbN1)</name>
    <name type="common">Azoarcus sp. (strain EbN1)</name>
    <dbReference type="NCBI Taxonomy" id="76114"/>
    <lineage>
        <taxon>Bacteria</taxon>
        <taxon>Pseudomonadati</taxon>
        <taxon>Pseudomonadota</taxon>
        <taxon>Betaproteobacteria</taxon>
        <taxon>Rhodocyclales</taxon>
        <taxon>Rhodocyclaceae</taxon>
        <taxon>Aromatoleum</taxon>
    </lineage>
</organism>
<proteinExistence type="inferred from homology"/>
<gene>
    <name evidence="1" type="primary">plsX</name>
    <name type="ordered locus">AZOSEA31020</name>
    <name type="ORF">ebA5454</name>
</gene>
<name>PLSX_AROAE</name>
<feature type="chain" id="PRO_0000189838" description="Phosphate acyltransferase">
    <location>
        <begin position="1"/>
        <end position="337"/>
    </location>
</feature>
<reference key="1">
    <citation type="journal article" date="2005" name="Arch. Microbiol.">
        <title>The genome sequence of an anaerobic aromatic-degrading denitrifying bacterium, strain EbN1.</title>
        <authorList>
            <person name="Rabus R."/>
            <person name="Kube M."/>
            <person name="Heider J."/>
            <person name="Beck A."/>
            <person name="Heitmann K."/>
            <person name="Widdel F."/>
            <person name="Reinhardt R."/>
        </authorList>
    </citation>
    <scope>NUCLEOTIDE SEQUENCE [LARGE SCALE GENOMIC DNA]</scope>
    <source>
        <strain>DSM 19018 / LMG 30748 / EbN1</strain>
    </source>
</reference>